<gene>
    <name evidence="1" type="primary">fmt</name>
    <name type="ordered locus">Dtur_1439</name>
</gene>
<sequence>MRIIYFGTPEFSRIILERISPYLNIIAVVTQPDKPKGRGKRIMCSPVKDFAISKGIPVYQPEKLKGNKEFFEIIRSLNPEALVVASYGKIIPEDILNIPPYGGINVHASVLPKYRGAAPIERAIMNCEKETGVSIMKMERGLDTGPVYAIRKIPILPDDNRGTLSIKLAHLGAELLLEVLPLIKDGKLSPVPQEESLATYAPKLSKEEEIIDWNMRGEKIWCQIRALSPEPGAMTFFRGKILKIFKADFEEKIFNEEIINGTIIEQNKKRGIGVKVNNGILWLLELQPEGKKRMSFLEFMNGYRLNIGERFENS</sequence>
<name>FMT_DICTD</name>
<reference key="1">
    <citation type="journal article" date="2016" name="Front. Microbiol.">
        <title>The complete genome sequence of hyperthermophile Dictyoglomus turgidum DSM 6724 reveals a specialized carbohydrate fermentor.</title>
        <authorList>
            <person name="Brumm P.J."/>
            <person name="Gowda K."/>
            <person name="Robb F.T."/>
            <person name="Mead D.A."/>
        </authorList>
    </citation>
    <scope>NUCLEOTIDE SEQUENCE [LARGE SCALE GENOMIC DNA]</scope>
    <source>
        <strain>DSM 6724 / Z-1310</strain>
    </source>
</reference>
<protein>
    <recommendedName>
        <fullName evidence="1">Methionyl-tRNA formyltransferase</fullName>
        <ecNumber evidence="1">2.1.2.9</ecNumber>
    </recommendedName>
</protein>
<evidence type="ECO:0000255" key="1">
    <source>
        <dbReference type="HAMAP-Rule" id="MF_00182"/>
    </source>
</evidence>
<accession>B8E0X6</accession>
<organism>
    <name type="scientific">Dictyoglomus turgidum (strain DSM 6724 / Z-1310)</name>
    <dbReference type="NCBI Taxonomy" id="515635"/>
    <lineage>
        <taxon>Bacteria</taxon>
        <taxon>Pseudomonadati</taxon>
        <taxon>Dictyoglomota</taxon>
        <taxon>Dictyoglomia</taxon>
        <taxon>Dictyoglomales</taxon>
        <taxon>Dictyoglomaceae</taxon>
        <taxon>Dictyoglomus</taxon>
    </lineage>
</organism>
<comment type="function">
    <text evidence="1">Attaches a formyl group to the free amino group of methionyl-tRNA(fMet). The formyl group appears to play a dual role in the initiator identity of N-formylmethionyl-tRNA by promoting its recognition by IF2 and preventing the misappropriation of this tRNA by the elongation apparatus.</text>
</comment>
<comment type="catalytic activity">
    <reaction evidence="1">
        <text>L-methionyl-tRNA(fMet) + (6R)-10-formyltetrahydrofolate = N-formyl-L-methionyl-tRNA(fMet) + (6S)-5,6,7,8-tetrahydrofolate + H(+)</text>
        <dbReference type="Rhea" id="RHEA:24380"/>
        <dbReference type="Rhea" id="RHEA-COMP:9952"/>
        <dbReference type="Rhea" id="RHEA-COMP:9953"/>
        <dbReference type="ChEBI" id="CHEBI:15378"/>
        <dbReference type="ChEBI" id="CHEBI:57453"/>
        <dbReference type="ChEBI" id="CHEBI:78530"/>
        <dbReference type="ChEBI" id="CHEBI:78844"/>
        <dbReference type="ChEBI" id="CHEBI:195366"/>
        <dbReference type="EC" id="2.1.2.9"/>
    </reaction>
</comment>
<comment type="similarity">
    <text evidence="1">Belongs to the Fmt family.</text>
</comment>
<proteinExistence type="inferred from homology"/>
<keyword id="KW-0648">Protein biosynthesis</keyword>
<keyword id="KW-1185">Reference proteome</keyword>
<keyword id="KW-0808">Transferase</keyword>
<feature type="chain" id="PRO_1000118475" description="Methionyl-tRNA formyltransferase">
    <location>
        <begin position="1"/>
        <end position="314"/>
    </location>
</feature>
<feature type="binding site" evidence="1">
    <location>
        <begin position="109"/>
        <end position="112"/>
    </location>
    <ligand>
        <name>(6S)-5,6,7,8-tetrahydrofolate</name>
        <dbReference type="ChEBI" id="CHEBI:57453"/>
    </ligand>
</feature>
<dbReference type="EC" id="2.1.2.9" evidence="1"/>
<dbReference type="EMBL" id="CP001251">
    <property type="protein sequence ID" value="ACK42713.1"/>
    <property type="molecule type" value="Genomic_DNA"/>
</dbReference>
<dbReference type="RefSeq" id="WP_012583791.1">
    <property type="nucleotide sequence ID" value="NC_011661.1"/>
</dbReference>
<dbReference type="RefSeq" id="YP_002353327.1">
    <property type="nucleotide sequence ID" value="NC_011661.1"/>
</dbReference>
<dbReference type="SMR" id="B8E0X6"/>
<dbReference type="FunCoup" id="B8E0X6">
    <property type="interactions" value="356"/>
</dbReference>
<dbReference type="STRING" id="515635.Dtur_1439"/>
<dbReference type="EnsemblBacteria" id="ACK42713">
    <property type="protein sequence ID" value="ACK42713"/>
    <property type="gene ID" value="Dtur_1439"/>
</dbReference>
<dbReference type="KEGG" id="dtu:Dtur_1439"/>
<dbReference type="PATRIC" id="fig|515635.4.peg.1486"/>
<dbReference type="eggNOG" id="COG0223">
    <property type="taxonomic scope" value="Bacteria"/>
</dbReference>
<dbReference type="HOGENOM" id="CLU_033347_1_1_0"/>
<dbReference type="InParanoid" id="B8E0X6"/>
<dbReference type="OrthoDB" id="9802815at2"/>
<dbReference type="Proteomes" id="UP000007719">
    <property type="component" value="Chromosome"/>
</dbReference>
<dbReference type="GO" id="GO:0005829">
    <property type="term" value="C:cytosol"/>
    <property type="evidence" value="ECO:0000318"/>
    <property type="project" value="GO_Central"/>
</dbReference>
<dbReference type="GO" id="GO:0004479">
    <property type="term" value="F:methionyl-tRNA formyltransferase activity"/>
    <property type="evidence" value="ECO:0000318"/>
    <property type="project" value="GO_Central"/>
</dbReference>
<dbReference type="GO" id="GO:0071951">
    <property type="term" value="P:conversion of methionyl-tRNA to N-formyl-methionyl-tRNA"/>
    <property type="evidence" value="ECO:0000318"/>
    <property type="project" value="GO_Central"/>
</dbReference>
<dbReference type="CDD" id="cd08646">
    <property type="entry name" value="FMT_core_Met-tRNA-FMT_N"/>
    <property type="match status" value="1"/>
</dbReference>
<dbReference type="CDD" id="cd08704">
    <property type="entry name" value="Met_tRNA_FMT_C"/>
    <property type="match status" value="1"/>
</dbReference>
<dbReference type="FunFam" id="3.40.50.12230:FF:000001">
    <property type="entry name" value="Methionyl-tRNA formyltransferase"/>
    <property type="match status" value="1"/>
</dbReference>
<dbReference type="Gene3D" id="3.40.50.12230">
    <property type="match status" value="1"/>
</dbReference>
<dbReference type="HAMAP" id="MF_00182">
    <property type="entry name" value="Formyl_trans"/>
    <property type="match status" value="1"/>
</dbReference>
<dbReference type="InterPro" id="IPR005794">
    <property type="entry name" value="Fmt"/>
</dbReference>
<dbReference type="InterPro" id="IPR005793">
    <property type="entry name" value="Formyl_trans_C"/>
</dbReference>
<dbReference type="InterPro" id="IPR002376">
    <property type="entry name" value="Formyl_transf_N"/>
</dbReference>
<dbReference type="InterPro" id="IPR036477">
    <property type="entry name" value="Formyl_transf_N_sf"/>
</dbReference>
<dbReference type="InterPro" id="IPR011034">
    <property type="entry name" value="Formyl_transferase-like_C_sf"/>
</dbReference>
<dbReference type="InterPro" id="IPR044135">
    <property type="entry name" value="Met-tRNA-FMT_C"/>
</dbReference>
<dbReference type="InterPro" id="IPR041711">
    <property type="entry name" value="Met-tRNA-FMT_N"/>
</dbReference>
<dbReference type="NCBIfam" id="TIGR00460">
    <property type="entry name" value="fmt"/>
    <property type="match status" value="1"/>
</dbReference>
<dbReference type="PANTHER" id="PTHR11138">
    <property type="entry name" value="METHIONYL-TRNA FORMYLTRANSFERASE"/>
    <property type="match status" value="1"/>
</dbReference>
<dbReference type="PANTHER" id="PTHR11138:SF5">
    <property type="entry name" value="METHIONYL-TRNA FORMYLTRANSFERASE, MITOCHONDRIAL"/>
    <property type="match status" value="1"/>
</dbReference>
<dbReference type="Pfam" id="PF02911">
    <property type="entry name" value="Formyl_trans_C"/>
    <property type="match status" value="1"/>
</dbReference>
<dbReference type="Pfam" id="PF00551">
    <property type="entry name" value="Formyl_trans_N"/>
    <property type="match status" value="1"/>
</dbReference>
<dbReference type="SUPFAM" id="SSF50486">
    <property type="entry name" value="FMT C-terminal domain-like"/>
    <property type="match status" value="1"/>
</dbReference>
<dbReference type="SUPFAM" id="SSF53328">
    <property type="entry name" value="Formyltransferase"/>
    <property type="match status" value="1"/>
</dbReference>